<protein>
    <recommendedName>
        <fullName>Homeobox protein GBX-2</fullName>
    </recommendedName>
    <alternativeName>
        <fullName>Gastrulation and brain-specific homeobox protein 2</fullName>
    </alternativeName>
    <alternativeName>
        <fullName>Stimulated by retinoic acid gene 7 protein</fullName>
    </alternativeName>
</protein>
<name>GBX2_MOUSE</name>
<proteinExistence type="evidence at transcript level"/>
<organism>
    <name type="scientific">Mus musculus</name>
    <name type="common">Mouse</name>
    <dbReference type="NCBI Taxonomy" id="10090"/>
    <lineage>
        <taxon>Eukaryota</taxon>
        <taxon>Metazoa</taxon>
        <taxon>Chordata</taxon>
        <taxon>Craniata</taxon>
        <taxon>Vertebrata</taxon>
        <taxon>Euteleostomi</taxon>
        <taxon>Mammalia</taxon>
        <taxon>Eutheria</taxon>
        <taxon>Euarchontoglires</taxon>
        <taxon>Glires</taxon>
        <taxon>Rodentia</taxon>
        <taxon>Myomorpha</taxon>
        <taxon>Muroidea</taxon>
        <taxon>Muridae</taxon>
        <taxon>Murinae</taxon>
        <taxon>Mus</taxon>
        <taxon>Mus</taxon>
    </lineage>
</organism>
<comment type="function">
    <text>May act as a transcription factor for cell pluripotency and differentiation in the embryo.</text>
</comment>
<comment type="subcellular location">
    <subcellularLocation>
        <location evidence="3">Nucleus</location>
    </subcellularLocation>
</comment>
<comment type="tissue specificity">
    <text>Expressed in adult brain, spleen and female genital tract. No expression in heart, liver, lung, kidney, or testis.</text>
</comment>
<comment type="developmental stage">
    <text>Expressed during gastrulation in the three primitive germ layers and in the pharyngeal arches. In later stages, expressed in the developing nervous system, midbrain/ hindbrain boundary, cerebellum anlage, certain rhombomeres, regions of the spinal cord, and in the developing dorsal thalamus and corpus striatum.</text>
</comment>
<sequence length="348" mass="37359">MSAAFPPSLMMMQRPLGSSTAFSIDSLIGSPPQPSPGHFVYTGYPMFMPYRPVVLPPPPPPPPALPQAALQPALPPAHPHHQIPSLPTGFCSSLAQGMALTSTLMATLPGGFSASPQHQEAAAARKFAPQPLPGGGNFDKAEALQADAEDGKAFLAKEGSLLAFSAAEAVQASLVGAVRGQGKDESKVEDDPKGKEESFSLESDVDYSSDDNLPGQTAHKEEDPGHALEETPQSGGAAGSTTSTGKNRRRRTAFTSEQLLELEKEFHCKKYLSLTERSQIAHALKLSEVQVKIWFQNRRAKWKRVKAGNANSKTGEPSRNPKIVVPIPVHVSRFAIRSQHQQLEQARP</sequence>
<feature type="chain" id="PRO_0000048881" description="Homeobox protein GBX-2">
    <location>
        <begin position="1"/>
        <end position="348"/>
    </location>
</feature>
<feature type="DNA-binding region" description="Homeobox" evidence="1">
    <location>
        <begin position="247"/>
        <end position="306"/>
    </location>
</feature>
<feature type="region of interest" description="Disordered" evidence="2">
    <location>
        <begin position="59"/>
        <end position="81"/>
    </location>
</feature>
<feature type="region of interest" description="Disordered" evidence="2">
    <location>
        <begin position="111"/>
        <end position="139"/>
    </location>
</feature>
<feature type="region of interest" description="Disordered" evidence="2">
    <location>
        <begin position="179"/>
        <end position="251"/>
    </location>
</feature>
<feature type="compositionally biased region" description="Basic and acidic residues" evidence="2">
    <location>
        <begin position="181"/>
        <end position="198"/>
    </location>
</feature>
<feature type="compositionally biased region" description="Basic and acidic residues" evidence="2">
    <location>
        <begin position="218"/>
        <end position="229"/>
    </location>
</feature>
<keyword id="KW-0238">DNA-binding</keyword>
<keyword id="KW-0371">Homeobox</keyword>
<keyword id="KW-0539">Nucleus</keyword>
<keyword id="KW-1185">Reference proteome</keyword>
<keyword id="KW-0804">Transcription</keyword>
<keyword id="KW-0805">Transcription regulation</keyword>
<evidence type="ECO:0000255" key="1">
    <source>
        <dbReference type="PROSITE-ProRule" id="PRU00108"/>
    </source>
</evidence>
<evidence type="ECO:0000256" key="2">
    <source>
        <dbReference type="SAM" id="MobiDB-lite"/>
    </source>
</evidence>
<evidence type="ECO:0000305" key="3"/>
<accession>P48031</accession>
<accession>Q14A66</accession>
<dbReference type="EMBL" id="Z48800">
    <property type="protein sequence ID" value="CAA88737.1"/>
    <property type="molecule type" value="mRNA"/>
</dbReference>
<dbReference type="EMBL" id="U74300">
    <property type="protein sequence ID" value="AAC61877.1"/>
    <property type="molecule type" value="Genomic_DNA"/>
</dbReference>
<dbReference type="EMBL" id="BC116965">
    <property type="protein sequence ID" value="AAI16966.1"/>
    <property type="molecule type" value="mRNA"/>
</dbReference>
<dbReference type="EMBL" id="BC120492">
    <property type="protein sequence ID" value="AAI20493.1"/>
    <property type="molecule type" value="mRNA"/>
</dbReference>
<dbReference type="EMBL" id="L39770">
    <property type="protein sequence ID" value="AAA65185.1"/>
    <property type="molecule type" value="mRNA"/>
</dbReference>
<dbReference type="EMBL" id="M81661">
    <property type="protein sequence ID" value="AAA63314.1"/>
    <property type="molecule type" value="Genomic_DNA"/>
</dbReference>
<dbReference type="CCDS" id="CCDS15150.1"/>
<dbReference type="PIR" id="S52720">
    <property type="entry name" value="S52720"/>
</dbReference>
<dbReference type="RefSeq" id="NP_034392.1">
    <property type="nucleotide sequence ID" value="NM_010262.3"/>
</dbReference>
<dbReference type="SMR" id="P48031"/>
<dbReference type="FunCoup" id="P48031">
    <property type="interactions" value="1146"/>
</dbReference>
<dbReference type="STRING" id="10090.ENSMUSP00000048508"/>
<dbReference type="iPTMnet" id="P48031"/>
<dbReference type="PhosphoSitePlus" id="P48031"/>
<dbReference type="PaxDb" id="10090-ENSMUSP00000048508"/>
<dbReference type="Antibodypedia" id="20253">
    <property type="antibodies" value="322 antibodies from 34 providers"/>
</dbReference>
<dbReference type="DNASU" id="14472"/>
<dbReference type="Ensembl" id="ENSMUST00000036954.9">
    <property type="protein sequence ID" value="ENSMUSP00000048508.8"/>
    <property type="gene ID" value="ENSMUSG00000034486.9"/>
</dbReference>
<dbReference type="GeneID" id="14472"/>
<dbReference type="KEGG" id="mmu:14472"/>
<dbReference type="UCSC" id="uc007bzb.1">
    <property type="organism name" value="mouse"/>
</dbReference>
<dbReference type="AGR" id="MGI:95668"/>
<dbReference type="CTD" id="2637"/>
<dbReference type="MGI" id="MGI:95668">
    <property type="gene designation" value="Gbx2"/>
</dbReference>
<dbReference type="VEuPathDB" id="HostDB:ENSMUSG00000034486"/>
<dbReference type="eggNOG" id="KOG0489">
    <property type="taxonomic scope" value="Eukaryota"/>
</dbReference>
<dbReference type="GeneTree" id="ENSGT00940000154365"/>
<dbReference type="HOGENOM" id="CLU_052189_0_0_1"/>
<dbReference type="InParanoid" id="P48031"/>
<dbReference type="OMA" id="EDECNRK"/>
<dbReference type="OrthoDB" id="6159439at2759"/>
<dbReference type="PhylomeDB" id="P48031"/>
<dbReference type="TreeFam" id="TF351530"/>
<dbReference type="BioGRID-ORCS" id="14472">
    <property type="hits" value="2 hits in 79 CRISPR screens"/>
</dbReference>
<dbReference type="ChiTaRS" id="Gbx2">
    <property type="organism name" value="mouse"/>
</dbReference>
<dbReference type="PRO" id="PR:P48031"/>
<dbReference type="Proteomes" id="UP000000589">
    <property type="component" value="Chromosome 1"/>
</dbReference>
<dbReference type="RNAct" id="P48031">
    <property type="molecule type" value="protein"/>
</dbReference>
<dbReference type="Bgee" id="ENSMUSG00000034486">
    <property type="expression patterns" value="Expressed in animal zygote and 109 other cell types or tissues"/>
</dbReference>
<dbReference type="GO" id="GO:0005654">
    <property type="term" value="C:nucleoplasm"/>
    <property type="evidence" value="ECO:0000304"/>
    <property type="project" value="Reactome"/>
</dbReference>
<dbReference type="GO" id="GO:0005634">
    <property type="term" value="C:nucleus"/>
    <property type="evidence" value="ECO:0000314"/>
    <property type="project" value="MGI"/>
</dbReference>
<dbReference type="GO" id="GO:0001228">
    <property type="term" value="F:DNA-binding transcription activator activity, RNA polymerase II-specific"/>
    <property type="evidence" value="ECO:0000314"/>
    <property type="project" value="NTNU_SB"/>
</dbReference>
<dbReference type="GO" id="GO:0000979">
    <property type="term" value="F:RNA polymerase II core promoter sequence-specific DNA binding"/>
    <property type="evidence" value="ECO:0000314"/>
    <property type="project" value="MGI"/>
</dbReference>
<dbReference type="GO" id="GO:0000977">
    <property type="term" value="F:RNA polymerase II transcription regulatory region sequence-specific DNA binding"/>
    <property type="evidence" value="ECO:0000314"/>
    <property type="project" value="MGI"/>
</dbReference>
<dbReference type="GO" id="GO:0061629">
    <property type="term" value="F:RNA polymerase II-specific DNA-binding transcription factor binding"/>
    <property type="evidence" value="ECO:0000314"/>
    <property type="project" value="MGI"/>
</dbReference>
<dbReference type="GO" id="GO:0048483">
    <property type="term" value="P:autonomic nervous system development"/>
    <property type="evidence" value="ECO:0000315"/>
    <property type="project" value="MGI"/>
</dbReference>
<dbReference type="GO" id="GO:0007411">
    <property type="term" value="P:axon guidance"/>
    <property type="evidence" value="ECO:0000315"/>
    <property type="project" value="MGI"/>
</dbReference>
<dbReference type="GO" id="GO:0001569">
    <property type="term" value="P:branching involved in blood vessel morphogenesis"/>
    <property type="evidence" value="ECO:0000315"/>
    <property type="project" value="MGI"/>
</dbReference>
<dbReference type="GO" id="GO:0021930">
    <property type="term" value="P:cerebellar granule cell precursor proliferation"/>
    <property type="evidence" value="ECO:0000315"/>
    <property type="project" value="MGI"/>
</dbReference>
<dbReference type="GO" id="GO:0021549">
    <property type="term" value="P:cerebellum development"/>
    <property type="evidence" value="ECO:0000315"/>
    <property type="project" value="MGI"/>
</dbReference>
<dbReference type="GO" id="GO:0021884">
    <property type="term" value="P:forebrain neuron development"/>
    <property type="evidence" value="ECO:0000315"/>
    <property type="project" value="MGI"/>
</dbReference>
<dbReference type="GO" id="GO:0030902">
    <property type="term" value="P:hindbrain development"/>
    <property type="evidence" value="ECO:0000315"/>
    <property type="project" value="MGI"/>
</dbReference>
<dbReference type="GO" id="GO:0042472">
    <property type="term" value="P:inner ear morphogenesis"/>
    <property type="evidence" value="ECO:0000315"/>
    <property type="project" value="MGI"/>
</dbReference>
<dbReference type="GO" id="GO:0030917">
    <property type="term" value="P:midbrain-hindbrain boundary development"/>
    <property type="evidence" value="ECO:0000315"/>
    <property type="project" value="MGI"/>
</dbReference>
<dbReference type="GO" id="GO:0021555">
    <property type="term" value="P:midbrain-hindbrain boundary morphogenesis"/>
    <property type="evidence" value="ECO:0000315"/>
    <property type="project" value="MGI"/>
</dbReference>
<dbReference type="GO" id="GO:0001755">
    <property type="term" value="P:neural crest cell migration"/>
    <property type="evidence" value="ECO:0000315"/>
    <property type="project" value="MGI"/>
</dbReference>
<dbReference type="GO" id="GO:0045944">
    <property type="term" value="P:positive regulation of transcription by RNA polymerase II"/>
    <property type="evidence" value="ECO:0000314"/>
    <property type="project" value="MGI"/>
</dbReference>
<dbReference type="GO" id="GO:0021568">
    <property type="term" value="P:rhombomere 2 development"/>
    <property type="evidence" value="ECO:0000315"/>
    <property type="project" value="MGI"/>
</dbReference>
<dbReference type="GO" id="GO:0021794">
    <property type="term" value="P:thalamus development"/>
    <property type="evidence" value="ECO:0000315"/>
    <property type="project" value="MGI"/>
</dbReference>
<dbReference type="GO" id="GO:0035239">
    <property type="term" value="P:tube morphogenesis"/>
    <property type="evidence" value="ECO:0000315"/>
    <property type="project" value="MGI"/>
</dbReference>
<dbReference type="CDD" id="cd00086">
    <property type="entry name" value="homeodomain"/>
    <property type="match status" value="1"/>
</dbReference>
<dbReference type="FunFam" id="1.10.10.60:FF:000248">
    <property type="entry name" value="Gastrulation brain homeobox 2"/>
    <property type="match status" value="1"/>
</dbReference>
<dbReference type="Gene3D" id="1.10.10.60">
    <property type="entry name" value="Homeodomain-like"/>
    <property type="match status" value="1"/>
</dbReference>
<dbReference type="InterPro" id="IPR042982">
    <property type="entry name" value="GBX-1/2"/>
</dbReference>
<dbReference type="InterPro" id="IPR001356">
    <property type="entry name" value="HD"/>
</dbReference>
<dbReference type="InterPro" id="IPR020479">
    <property type="entry name" value="HD_metazoa"/>
</dbReference>
<dbReference type="InterPro" id="IPR017970">
    <property type="entry name" value="Homeobox_CS"/>
</dbReference>
<dbReference type="InterPro" id="IPR009057">
    <property type="entry name" value="Homeodomain-like_sf"/>
</dbReference>
<dbReference type="PANTHER" id="PTHR24334">
    <property type="entry name" value="HOMEOBOX PROTEIN GBX"/>
    <property type="match status" value="1"/>
</dbReference>
<dbReference type="PANTHER" id="PTHR24334:SF3">
    <property type="entry name" value="HOMEOBOX PROTEIN GBX-2"/>
    <property type="match status" value="1"/>
</dbReference>
<dbReference type="Pfam" id="PF00046">
    <property type="entry name" value="Homeodomain"/>
    <property type="match status" value="1"/>
</dbReference>
<dbReference type="PRINTS" id="PR00024">
    <property type="entry name" value="HOMEOBOX"/>
</dbReference>
<dbReference type="SMART" id="SM00389">
    <property type="entry name" value="HOX"/>
    <property type="match status" value="1"/>
</dbReference>
<dbReference type="SUPFAM" id="SSF46689">
    <property type="entry name" value="Homeodomain-like"/>
    <property type="match status" value="1"/>
</dbReference>
<dbReference type="PROSITE" id="PS00027">
    <property type="entry name" value="HOMEOBOX_1"/>
    <property type="match status" value="1"/>
</dbReference>
<dbReference type="PROSITE" id="PS50071">
    <property type="entry name" value="HOMEOBOX_2"/>
    <property type="match status" value="1"/>
</dbReference>
<reference key="1">
    <citation type="journal article" date="1995" name="Dev. Dyn.">
        <title>Sequence and expression pattern of the Stra7 (Gbx-2) homeobox-containing gene induced by retinoic acid in P19 embryonal carcinoma cells.</title>
        <authorList>
            <person name="Bouillet P."/>
            <person name="Chazaud C."/>
            <person name="Oulad Abdelghani M."/>
            <person name="Dolle P."/>
            <person name="Chambon P."/>
        </authorList>
    </citation>
    <scope>NUCLEOTIDE SEQUENCE [MRNA]</scope>
</reference>
<reference key="2">
    <citation type="journal article" date="1997" name="Genomics">
        <title>The mouse homeobox gene, Gbx2: genomic organization and expression in pluripotent cells in vitro and in vivo.</title>
        <authorList>
            <person name="Chapman G."/>
            <person name="Remiszewski J.L."/>
            <person name="Webb G.C."/>
            <person name="Schulz T.C."/>
            <person name="Bottema C.D.K."/>
            <person name="Rathjen P.D."/>
        </authorList>
    </citation>
    <scope>NUCLEOTIDE SEQUENCE [GENOMIC DNA]</scope>
    <source>
        <strain>129</strain>
    </source>
</reference>
<reference key="3">
    <citation type="journal article" date="2004" name="Genome Res.">
        <title>The status, quality, and expansion of the NIH full-length cDNA project: the Mammalian Gene Collection (MGC).</title>
        <authorList>
            <consortium name="The MGC Project Team"/>
        </authorList>
    </citation>
    <scope>NUCLEOTIDE SEQUENCE [LARGE SCALE MRNA]</scope>
    <source>
        <tissue>Brain</tissue>
    </source>
</reference>
<reference key="4">
    <citation type="journal article" date="1995" name="FEBS Lett.">
        <title>Sequence and evolutionary conservation of the murine Gbx-2 homeobox gene.</title>
        <authorList>
            <person name="Chapman G."/>
            <person name="Rathjen P.D."/>
        </authorList>
    </citation>
    <scope>NUCLEOTIDE SEQUENCE [MRNA] OF 10-348</scope>
    <source>
        <strain>129</strain>
    </source>
</reference>
<reference key="5">
    <citation type="journal article" date="1991" name="Proc. Natl. Acad. Sci. U.S.A.">
        <title>Detection of homeobox genes in development and evolution.</title>
        <authorList>
            <person name="Murtha M.T."/>
            <person name="Leckman J.F."/>
            <person name="Ruddle F.H."/>
        </authorList>
    </citation>
    <scope>NUCLEOTIDE SEQUENCE [GENOMIC DNA] OF 268-292</scope>
    <source>
        <strain>C57BL/6J</strain>
        <tissue>Spleen</tissue>
    </source>
</reference>
<gene>
    <name type="primary">Gbx2</name>
    <name type="synonym">Mmoxa</name>
    <name type="synonym">Stra7</name>
</gene>